<comment type="function">
    <text>Involved in the regulation of different processes depending on the cell density. Acts together with sigma-54 to repress, perhaps indirectly, some genes.</text>
</comment>
<accession>O87455</accession>
<accession>A5EYL5</accession>
<accession>C3M7M0</accession>
<proteinExistence type="evidence at protein level"/>
<gene>
    <name type="primary">luxO</name>
    <name type="synonym">s54act4</name>
    <name type="ordered locus">VC0395_1095</name>
    <name type="ordered locus">VC395_A0173</name>
</gene>
<dbReference type="EMBL" id="CP000626">
    <property type="protein sequence ID" value="ABQ18923.1"/>
    <property type="molecule type" value="Genomic_DNA"/>
</dbReference>
<dbReference type="EMBL" id="CP001236">
    <property type="protein sequence ID" value="ACP11016.1"/>
    <property type="molecule type" value="Genomic_DNA"/>
</dbReference>
<dbReference type="EMBL" id="AF069388">
    <property type="protein sequence ID" value="AAC62403.1"/>
    <property type="molecule type" value="Genomic_DNA"/>
</dbReference>
<dbReference type="SMR" id="O87455"/>
<dbReference type="KEGG" id="vco:VC0395_1095"/>
<dbReference type="KEGG" id="vcr:VC395_A0173"/>
<dbReference type="PATRIC" id="fig|345073.21.peg.2934"/>
<dbReference type="eggNOG" id="COG3604">
    <property type="taxonomic scope" value="Bacteria"/>
</dbReference>
<dbReference type="HOGENOM" id="CLU_000445_125_3_6"/>
<dbReference type="OrthoDB" id="9804019at2"/>
<dbReference type="Proteomes" id="UP000000249">
    <property type="component" value="Chromosome 1"/>
</dbReference>
<dbReference type="GO" id="GO:0005524">
    <property type="term" value="F:ATP binding"/>
    <property type="evidence" value="ECO:0007669"/>
    <property type="project" value="UniProtKB-KW"/>
</dbReference>
<dbReference type="GO" id="GO:0016887">
    <property type="term" value="F:ATP hydrolysis activity"/>
    <property type="evidence" value="ECO:0007669"/>
    <property type="project" value="InterPro"/>
</dbReference>
<dbReference type="GO" id="GO:0003677">
    <property type="term" value="F:DNA binding"/>
    <property type="evidence" value="ECO:0007669"/>
    <property type="project" value="UniProtKB-KW"/>
</dbReference>
<dbReference type="GO" id="GO:0000160">
    <property type="term" value="P:phosphorelay signal transduction system"/>
    <property type="evidence" value="ECO:0007669"/>
    <property type="project" value="UniProtKB-KW"/>
</dbReference>
<dbReference type="GO" id="GO:0006355">
    <property type="term" value="P:regulation of DNA-templated transcription"/>
    <property type="evidence" value="ECO:0007669"/>
    <property type="project" value="InterPro"/>
</dbReference>
<dbReference type="CDD" id="cd00009">
    <property type="entry name" value="AAA"/>
    <property type="match status" value="1"/>
</dbReference>
<dbReference type="FunFam" id="3.40.50.300:FF:000006">
    <property type="entry name" value="DNA-binding transcriptional regulator NtrC"/>
    <property type="match status" value="1"/>
</dbReference>
<dbReference type="Gene3D" id="1.10.8.60">
    <property type="match status" value="1"/>
</dbReference>
<dbReference type="Gene3D" id="3.30.450.40">
    <property type="match status" value="1"/>
</dbReference>
<dbReference type="Gene3D" id="1.10.10.60">
    <property type="entry name" value="Homeodomain-like"/>
    <property type="match status" value="1"/>
</dbReference>
<dbReference type="Gene3D" id="3.40.50.300">
    <property type="entry name" value="P-loop containing nucleotide triphosphate hydrolases"/>
    <property type="match status" value="1"/>
</dbReference>
<dbReference type="InterPro" id="IPR003593">
    <property type="entry name" value="AAA+_ATPase"/>
</dbReference>
<dbReference type="InterPro" id="IPR003018">
    <property type="entry name" value="GAF"/>
</dbReference>
<dbReference type="InterPro" id="IPR029016">
    <property type="entry name" value="GAF-like_dom_sf"/>
</dbReference>
<dbReference type="InterPro" id="IPR009057">
    <property type="entry name" value="Homeodomain-like_sf"/>
</dbReference>
<dbReference type="InterPro" id="IPR027417">
    <property type="entry name" value="P-loop_NTPase"/>
</dbReference>
<dbReference type="InterPro" id="IPR002078">
    <property type="entry name" value="Sigma_54_int"/>
</dbReference>
<dbReference type="InterPro" id="IPR025662">
    <property type="entry name" value="Sigma_54_int_dom_ATP-bd_1"/>
</dbReference>
<dbReference type="InterPro" id="IPR025943">
    <property type="entry name" value="Sigma_54_int_dom_ATP-bd_2"/>
</dbReference>
<dbReference type="InterPro" id="IPR025944">
    <property type="entry name" value="Sigma_54_int_dom_CS"/>
</dbReference>
<dbReference type="NCBIfam" id="NF003451">
    <property type="entry name" value="PRK05022.1"/>
    <property type="match status" value="1"/>
</dbReference>
<dbReference type="PANTHER" id="PTHR32071:SF35">
    <property type="entry name" value="ANAEROBIC NITRIC OXIDE REDUCTASE TRANSCRIPTION REGULATOR NORR"/>
    <property type="match status" value="1"/>
</dbReference>
<dbReference type="PANTHER" id="PTHR32071">
    <property type="entry name" value="TRANSCRIPTIONAL REGULATORY PROTEIN"/>
    <property type="match status" value="1"/>
</dbReference>
<dbReference type="Pfam" id="PF01590">
    <property type="entry name" value="GAF"/>
    <property type="match status" value="1"/>
</dbReference>
<dbReference type="Pfam" id="PF00158">
    <property type="entry name" value="Sigma54_activat"/>
    <property type="match status" value="1"/>
</dbReference>
<dbReference type="SMART" id="SM00382">
    <property type="entry name" value="AAA"/>
    <property type="match status" value="1"/>
</dbReference>
<dbReference type="SMART" id="SM00065">
    <property type="entry name" value="GAF"/>
    <property type="match status" value="1"/>
</dbReference>
<dbReference type="SUPFAM" id="SSF55781">
    <property type="entry name" value="GAF domain-like"/>
    <property type="match status" value="1"/>
</dbReference>
<dbReference type="SUPFAM" id="SSF46689">
    <property type="entry name" value="Homeodomain-like"/>
    <property type="match status" value="1"/>
</dbReference>
<dbReference type="SUPFAM" id="SSF52540">
    <property type="entry name" value="P-loop containing nucleoside triphosphate hydrolases"/>
    <property type="match status" value="1"/>
</dbReference>
<dbReference type="PROSITE" id="PS00675">
    <property type="entry name" value="SIGMA54_INTERACT_1"/>
    <property type="match status" value="1"/>
</dbReference>
<dbReference type="PROSITE" id="PS00676">
    <property type="entry name" value="SIGMA54_INTERACT_2"/>
    <property type="match status" value="1"/>
</dbReference>
<dbReference type="PROSITE" id="PS00688">
    <property type="entry name" value="SIGMA54_INTERACT_3"/>
    <property type="match status" value="1"/>
</dbReference>
<dbReference type="PROSITE" id="PS50045">
    <property type="entry name" value="SIGMA54_INTERACT_4"/>
    <property type="match status" value="1"/>
</dbReference>
<organism>
    <name type="scientific">Vibrio cholerae serotype O1 (strain ATCC 39541 / Classical Ogawa 395 / O395)</name>
    <dbReference type="NCBI Taxonomy" id="345073"/>
    <lineage>
        <taxon>Bacteria</taxon>
        <taxon>Pseudomonadati</taxon>
        <taxon>Pseudomonadota</taxon>
        <taxon>Gammaproteobacteria</taxon>
        <taxon>Vibrionales</taxon>
        <taxon>Vibrionaceae</taxon>
        <taxon>Vibrio</taxon>
    </lineage>
</organism>
<reference key="1">
    <citation type="submission" date="2007-03" db="EMBL/GenBank/DDBJ databases">
        <authorList>
            <person name="Heidelberg J."/>
        </authorList>
    </citation>
    <scope>NUCLEOTIDE SEQUENCE [LARGE SCALE GENOMIC DNA]</scope>
    <source>
        <strain>ATCC 39541 / Classical Ogawa 395 / O395</strain>
    </source>
</reference>
<reference key="2">
    <citation type="journal article" date="2008" name="PLoS ONE">
        <title>A recalibrated molecular clock and independent origins for the cholera pandemic clones.</title>
        <authorList>
            <person name="Feng L."/>
            <person name="Reeves P.R."/>
            <person name="Lan R."/>
            <person name="Ren Y."/>
            <person name="Gao C."/>
            <person name="Zhou Z."/>
            <person name="Ren Y."/>
            <person name="Cheng J."/>
            <person name="Wang W."/>
            <person name="Wang J."/>
            <person name="Qian W."/>
            <person name="Li D."/>
            <person name="Wang L."/>
        </authorList>
    </citation>
    <scope>NUCLEOTIDE SEQUENCE [LARGE SCALE GENOMIC DNA]</scope>
    <source>
        <strain>ATCC 39541 / Classical Ogawa 395 / O395</strain>
    </source>
</reference>
<reference key="3">
    <citation type="journal article" date="1998" name="J. Bacteriol.">
        <title>Identification of multiple sigma54-dependent transcriptional activators in Vibrio cholerae.</title>
        <authorList>
            <person name="Klose K.E."/>
            <person name="Novik V."/>
            <person name="Mekalanos J.J."/>
        </authorList>
    </citation>
    <scope>NUCLEOTIDE SEQUENCE [GENOMIC DNA] OF 262-411</scope>
    <scope>INTERACTION WITH SIGMA-54</scope>
</reference>
<feature type="chain" id="PRO_0000081116" description="Regulatory protein LuxO">
    <location>
        <begin position="1"/>
        <end position="530"/>
    </location>
</feature>
<feature type="domain" description="Sigma-54 factor interaction" evidence="1">
    <location>
        <begin position="194"/>
        <end position="423"/>
    </location>
</feature>
<feature type="binding site" evidence="1">
    <location>
        <begin position="222"/>
        <end position="229"/>
    </location>
    <ligand>
        <name>ATP</name>
        <dbReference type="ChEBI" id="CHEBI:30616"/>
    </ligand>
</feature>
<feature type="binding site" evidence="1">
    <location>
        <begin position="285"/>
        <end position="294"/>
    </location>
    <ligand>
        <name>ATP</name>
        <dbReference type="ChEBI" id="CHEBI:30616"/>
    </ligand>
</feature>
<feature type="sequence conflict" description="In Ref. 3; AAC62403." evidence="2" ref="3">
    <original>W</original>
    <variation>C</variation>
    <location>
        <position position="407"/>
    </location>
</feature>
<protein>
    <recommendedName>
        <fullName>Regulatory protein LuxO</fullName>
    </recommendedName>
</protein>
<keyword id="KW-0067">ATP-binding</keyword>
<keyword id="KW-0238">DNA-binding</keyword>
<keyword id="KW-0547">Nucleotide-binding</keyword>
<keyword id="KW-0597">Phosphoprotein</keyword>
<keyword id="KW-0678">Repressor</keyword>
<keyword id="KW-0804">Transcription</keyword>
<keyword id="KW-0805">Transcription regulation</keyword>
<keyword id="KW-0902">Two-component regulatory system</keyword>
<evidence type="ECO:0000255" key="1">
    <source>
        <dbReference type="PROSITE-ProRule" id="PRU00193"/>
    </source>
</evidence>
<evidence type="ECO:0000305" key="2"/>
<sequence length="530" mass="59027">MQEFSLSTLLEMTVGLASGANNEERFHRLLDAVRKAVICDCVVLMSLHNDTLTPLAMQGLTRDTLGRRFVVSEHPRLAQICSADLPVRFAADCPLPDPFDGLLLDSEDDLPMHSCMGLPLHFGEQLLGILTLDSLKPDAFDHLSPRSLEILAAIAAATLKMTLTFSELENQAKQTQLRLEELNQEAWSRDSVEIIGNSGPMLAMKADIDVVAPSQFNILIHGETGVGKELVARTIHQRSNRKRQPLVYVNCAAIPENLLESELFGHVKGAFTGADRARMGKFALADGGTLFLDEIGELPLSAQSKILRALQNHEIQPVGQDRVQTVDVRILAATNRDLKKEVEAGRFRADLYHRLSVYPIYVPPLRERKGDLSLLAGYFVEQARRKLGITQLKLHGDVLSQLIQYPWPGNVRELEHVINRAALKAKARQRGRPVTTLKVEDLGELQGPRAAMVEPTAQDEPMLGEWIGELGLRDATDEFQRHLISETLTQADFNWAEAARRLQTDRANLTRLAKRLGITVSRSHSIERSR</sequence>
<name>LUXO_VIBC3</name>